<name>TILS_YERPE</name>
<protein>
    <recommendedName>
        <fullName evidence="1">tRNA(Ile)-lysidine synthase</fullName>
        <ecNumber evidence="1">6.3.4.19</ecNumber>
    </recommendedName>
    <alternativeName>
        <fullName evidence="1">tRNA(Ile)-2-lysyl-cytidine synthase</fullName>
    </alternativeName>
    <alternativeName>
        <fullName evidence="1">tRNA(Ile)-lysidine synthetase</fullName>
    </alternativeName>
</protein>
<reference key="1">
    <citation type="journal article" date="2001" name="Nature">
        <title>Genome sequence of Yersinia pestis, the causative agent of plague.</title>
        <authorList>
            <person name="Parkhill J."/>
            <person name="Wren B.W."/>
            <person name="Thomson N.R."/>
            <person name="Titball R.W."/>
            <person name="Holden M.T.G."/>
            <person name="Prentice M.B."/>
            <person name="Sebaihia M."/>
            <person name="James K.D."/>
            <person name="Churcher C.M."/>
            <person name="Mungall K.L."/>
            <person name="Baker S."/>
            <person name="Basham D."/>
            <person name="Bentley S.D."/>
            <person name="Brooks K."/>
            <person name="Cerdeno-Tarraga A.-M."/>
            <person name="Chillingworth T."/>
            <person name="Cronin A."/>
            <person name="Davies R.M."/>
            <person name="Davis P."/>
            <person name="Dougan G."/>
            <person name="Feltwell T."/>
            <person name="Hamlin N."/>
            <person name="Holroyd S."/>
            <person name="Jagels K."/>
            <person name="Karlyshev A.V."/>
            <person name="Leather S."/>
            <person name="Moule S."/>
            <person name="Oyston P.C.F."/>
            <person name="Quail M.A."/>
            <person name="Rutherford K.M."/>
            <person name="Simmonds M."/>
            <person name="Skelton J."/>
            <person name="Stevens K."/>
            <person name="Whitehead S."/>
            <person name="Barrell B.G."/>
        </authorList>
    </citation>
    <scope>NUCLEOTIDE SEQUENCE [LARGE SCALE GENOMIC DNA]</scope>
    <source>
        <strain>CO-92 / Biovar Orientalis</strain>
    </source>
</reference>
<reference key="2">
    <citation type="journal article" date="2002" name="J. Bacteriol.">
        <title>Genome sequence of Yersinia pestis KIM.</title>
        <authorList>
            <person name="Deng W."/>
            <person name="Burland V."/>
            <person name="Plunkett G. III"/>
            <person name="Boutin A."/>
            <person name="Mayhew G.F."/>
            <person name="Liss P."/>
            <person name="Perna N.T."/>
            <person name="Rose D.J."/>
            <person name="Mau B."/>
            <person name="Zhou S."/>
            <person name="Schwartz D.C."/>
            <person name="Fetherston J.D."/>
            <person name="Lindler L.E."/>
            <person name="Brubaker R.R."/>
            <person name="Plano G.V."/>
            <person name="Straley S.C."/>
            <person name="McDonough K.A."/>
            <person name="Nilles M.L."/>
            <person name="Matson J.S."/>
            <person name="Blattner F.R."/>
            <person name="Perry R.D."/>
        </authorList>
    </citation>
    <scope>NUCLEOTIDE SEQUENCE [LARGE SCALE GENOMIC DNA]</scope>
    <source>
        <strain>KIM10+ / Biovar Mediaevalis</strain>
    </source>
</reference>
<reference key="3">
    <citation type="journal article" date="2004" name="DNA Res.">
        <title>Complete genome sequence of Yersinia pestis strain 91001, an isolate avirulent to humans.</title>
        <authorList>
            <person name="Song Y."/>
            <person name="Tong Z."/>
            <person name="Wang J."/>
            <person name="Wang L."/>
            <person name="Guo Z."/>
            <person name="Han Y."/>
            <person name="Zhang J."/>
            <person name="Pei D."/>
            <person name="Zhou D."/>
            <person name="Qin H."/>
            <person name="Pang X."/>
            <person name="Han Y."/>
            <person name="Zhai J."/>
            <person name="Li M."/>
            <person name="Cui B."/>
            <person name="Qi Z."/>
            <person name="Jin L."/>
            <person name="Dai R."/>
            <person name="Chen F."/>
            <person name="Li S."/>
            <person name="Ye C."/>
            <person name="Du Z."/>
            <person name="Lin W."/>
            <person name="Wang J."/>
            <person name="Yu J."/>
            <person name="Yang H."/>
            <person name="Wang J."/>
            <person name="Huang P."/>
            <person name="Yang R."/>
        </authorList>
    </citation>
    <scope>NUCLEOTIDE SEQUENCE [LARGE SCALE GENOMIC DNA]</scope>
    <source>
        <strain>91001 / Biovar Mediaevalis</strain>
    </source>
</reference>
<gene>
    <name evidence="1" type="primary">tilS</name>
    <name type="ordered locus">YPO1062</name>
    <name type="ordered locus">y3117</name>
    <name type="ordered locus">YP_2788</name>
</gene>
<keyword id="KW-0067">ATP-binding</keyword>
<keyword id="KW-0963">Cytoplasm</keyword>
<keyword id="KW-0436">Ligase</keyword>
<keyword id="KW-0547">Nucleotide-binding</keyword>
<keyword id="KW-1185">Reference proteome</keyword>
<keyword id="KW-0819">tRNA processing</keyword>
<accession>Q8ZH50</accession>
<accession>Q0WHY3</accession>
<accession>Q74S53</accession>
<accession>Q7CH21</accession>
<organism>
    <name type="scientific">Yersinia pestis</name>
    <dbReference type="NCBI Taxonomy" id="632"/>
    <lineage>
        <taxon>Bacteria</taxon>
        <taxon>Pseudomonadati</taxon>
        <taxon>Pseudomonadota</taxon>
        <taxon>Gammaproteobacteria</taxon>
        <taxon>Enterobacterales</taxon>
        <taxon>Yersiniaceae</taxon>
        <taxon>Yersinia</taxon>
    </lineage>
</organism>
<comment type="function">
    <text evidence="1">Ligates lysine onto the cytidine present at position 34 of the AUA codon-specific tRNA(Ile) that contains the anticodon CAU, in an ATP-dependent manner. Cytidine is converted to lysidine, thus changing the amino acid specificity of the tRNA from methionine to isoleucine.</text>
</comment>
<comment type="catalytic activity">
    <reaction evidence="1">
        <text>cytidine(34) in tRNA(Ile2) + L-lysine + ATP = lysidine(34) in tRNA(Ile2) + AMP + diphosphate + H(+)</text>
        <dbReference type="Rhea" id="RHEA:43744"/>
        <dbReference type="Rhea" id="RHEA-COMP:10625"/>
        <dbReference type="Rhea" id="RHEA-COMP:10670"/>
        <dbReference type="ChEBI" id="CHEBI:15378"/>
        <dbReference type="ChEBI" id="CHEBI:30616"/>
        <dbReference type="ChEBI" id="CHEBI:32551"/>
        <dbReference type="ChEBI" id="CHEBI:33019"/>
        <dbReference type="ChEBI" id="CHEBI:82748"/>
        <dbReference type="ChEBI" id="CHEBI:83665"/>
        <dbReference type="ChEBI" id="CHEBI:456215"/>
        <dbReference type="EC" id="6.3.4.19"/>
    </reaction>
</comment>
<comment type="subcellular location">
    <subcellularLocation>
        <location evidence="1">Cytoplasm</location>
    </subcellularLocation>
</comment>
<comment type="domain">
    <text>The N-terminal region contains the highly conserved SGGXDS motif, predicted to be a P-loop motif involved in ATP binding.</text>
</comment>
<comment type="similarity">
    <text evidence="1">Belongs to the tRNA(Ile)-lysidine synthase family.</text>
</comment>
<sequence>MNLVTSKPNVLLNPLFAQLGENRHVLVGFSGGLDSTVLLHLLVCLRQQLIPELNIRAIHIHHGLNPQADSWVKHCMQQCDQWKIELKVVRVNIDPRQNGIEAAARTARYQAFSANLAAKEVLLTAQHLDDQCETFLLALKRGSGPAGLSAMAAKMPFAHSQLLRPLLAFSREILENYAQAQQLQWIEDDSNQDDRFDRNFLRLNVLPILNQRWPHFAQATARSAGLCAEQEQLLDELLAENLQQLQGPDRSLSIDGLLQASMAKRAAILRRWLASLGAPMPSQSQLQRLWLEVAMARQDAEPQLMIGTRQVRRFRQHLYLLMPLAEITTNYLPWATVKAAPNSSIIPLLPEPLWLPADLGVLRFVSAGGQAVRPAAVGEEISVRFGLQGDIKIVGRHHSRQSKKVWQELGIPPWQRERIPLLYFGEQLIAAAGVFVTQAGQANENEPCWHLDWDKPLRLG</sequence>
<proteinExistence type="inferred from homology"/>
<feature type="chain" id="PRO_0000181811" description="tRNA(Ile)-lysidine synthase">
    <location>
        <begin position="1"/>
        <end position="460"/>
    </location>
</feature>
<feature type="binding site" evidence="1">
    <location>
        <begin position="30"/>
        <end position="35"/>
    </location>
    <ligand>
        <name>ATP</name>
        <dbReference type="ChEBI" id="CHEBI:30616"/>
    </ligand>
</feature>
<evidence type="ECO:0000255" key="1">
    <source>
        <dbReference type="HAMAP-Rule" id="MF_01161"/>
    </source>
</evidence>
<dbReference type="EC" id="6.3.4.19" evidence="1"/>
<dbReference type="EMBL" id="AL590842">
    <property type="protein sequence ID" value="CAL19727.1"/>
    <property type="molecule type" value="Genomic_DNA"/>
</dbReference>
<dbReference type="EMBL" id="AE009952">
    <property type="protein sequence ID" value="AAM86667.1"/>
    <property type="molecule type" value="Genomic_DNA"/>
</dbReference>
<dbReference type="EMBL" id="AE017042">
    <property type="protein sequence ID" value="AAS62972.1"/>
    <property type="molecule type" value="Genomic_DNA"/>
</dbReference>
<dbReference type="PIR" id="AE0130">
    <property type="entry name" value="AE0130"/>
</dbReference>
<dbReference type="RefSeq" id="WP_002212149.1">
    <property type="nucleotide sequence ID" value="NZ_WUCM01000044.1"/>
</dbReference>
<dbReference type="RefSeq" id="YP_002346105.1">
    <property type="nucleotide sequence ID" value="NC_003143.1"/>
</dbReference>
<dbReference type="SMR" id="Q8ZH50"/>
<dbReference type="IntAct" id="Q8ZH50">
    <property type="interactions" value="1"/>
</dbReference>
<dbReference type="STRING" id="214092.YPO1062"/>
<dbReference type="PaxDb" id="214092-YPO1062"/>
<dbReference type="DNASU" id="1148064"/>
<dbReference type="EnsemblBacteria" id="AAS62972">
    <property type="protein sequence ID" value="AAS62972"/>
    <property type="gene ID" value="YP_2788"/>
</dbReference>
<dbReference type="GeneID" id="57977499"/>
<dbReference type="KEGG" id="ype:YPO1062"/>
<dbReference type="KEGG" id="ypk:y3117"/>
<dbReference type="KEGG" id="ypm:YP_2788"/>
<dbReference type="PATRIC" id="fig|214092.21.peg.1350"/>
<dbReference type="eggNOG" id="COG0037">
    <property type="taxonomic scope" value="Bacteria"/>
</dbReference>
<dbReference type="HOGENOM" id="CLU_018869_2_0_6"/>
<dbReference type="OMA" id="QTETFFL"/>
<dbReference type="OrthoDB" id="9807403at2"/>
<dbReference type="Proteomes" id="UP000000815">
    <property type="component" value="Chromosome"/>
</dbReference>
<dbReference type="Proteomes" id="UP000001019">
    <property type="component" value="Chromosome"/>
</dbReference>
<dbReference type="Proteomes" id="UP000002490">
    <property type="component" value="Chromosome"/>
</dbReference>
<dbReference type="GO" id="GO:0005737">
    <property type="term" value="C:cytoplasm"/>
    <property type="evidence" value="ECO:0007669"/>
    <property type="project" value="UniProtKB-SubCell"/>
</dbReference>
<dbReference type="GO" id="GO:0005524">
    <property type="term" value="F:ATP binding"/>
    <property type="evidence" value="ECO:0007669"/>
    <property type="project" value="UniProtKB-UniRule"/>
</dbReference>
<dbReference type="GO" id="GO:0032267">
    <property type="term" value="F:tRNA(Ile)-lysidine synthase activity"/>
    <property type="evidence" value="ECO:0007669"/>
    <property type="project" value="UniProtKB-EC"/>
</dbReference>
<dbReference type="GO" id="GO:0006400">
    <property type="term" value="P:tRNA modification"/>
    <property type="evidence" value="ECO:0007669"/>
    <property type="project" value="UniProtKB-UniRule"/>
</dbReference>
<dbReference type="CDD" id="cd01992">
    <property type="entry name" value="TilS_N"/>
    <property type="match status" value="1"/>
</dbReference>
<dbReference type="Gene3D" id="1.20.59.20">
    <property type="match status" value="1"/>
</dbReference>
<dbReference type="Gene3D" id="3.40.50.620">
    <property type="entry name" value="HUPs"/>
    <property type="match status" value="1"/>
</dbReference>
<dbReference type="HAMAP" id="MF_01161">
    <property type="entry name" value="tRNA_Ile_lys_synt"/>
    <property type="match status" value="1"/>
</dbReference>
<dbReference type="InterPro" id="IPR012796">
    <property type="entry name" value="Lysidine-tRNA-synth_C"/>
</dbReference>
<dbReference type="InterPro" id="IPR014729">
    <property type="entry name" value="Rossmann-like_a/b/a_fold"/>
</dbReference>
<dbReference type="InterPro" id="IPR011063">
    <property type="entry name" value="TilS/TtcA_N"/>
</dbReference>
<dbReference type="InterPro" id="IPR012094">
    <property type="entry name" value="tRNA_Ile_lys_synt"/>
</dbReference>
<dbReference type="InterPro" id="IPR012795">
    <property type="entry name" value="tRNA_Ile_lys_synt_N"/>
</dbReference>
<dbReference type="InterPro" id="IPR015262">
    <property type="entry name" value="tRNA_Ile_lys_synt_subst-bd"/>
</dbReference>
<dbReference type="NCBIfam" id="TIGR02433">
    <property type="entry name" value="lysidine_TilS_C"/>
    <property type="match status" value="1"/>
</dbReference>
<dbReference type="NCBIfam" id="TIGR02432">
    <property type="entry name" value="lysidine_TilS_N"/>
    <property type="match status" value="1"/>
</dbReference>
<dbReference type="NCBIfam" id="NF007942">
    <property type="entry name" value="PRK10660.1"/>
    <property type="match status" value="1"/>
</dbReference>
<dbReference type="PANTHER" id="PTHR43033">
    <property type="entry name" value="TRNA(ILE)-LYSIDINE SYNTHASE-RELATED"/>
    <property type="match status" value="1"/>
</dbReference>
<dbReference type="PANTHER" id="PTHR43033:SF1">
    <property type="entry name" value="TRNA(ILE)-LYSIDINE SYNTHASE-RELATED"/>
    <property type="match status" value="1"/>
</dbReference>
<dbReference type="Pfam" id="PF01171">
    <property type="entry name" value="ATP_bind_3"/>
    <property type="match status" value="1"/>
</dbReference>
<dbReference type="Pfam" id="PF09179">
    <property type="entry name" value="TilS"/>
    <property type="match status" value="1"/>
</dbReference>
<dbReference type="Pfam" id="PF11734">
    <property type="entry name" value="TilS_C"/>
    <property type="match status" value="1"/>
</dbReference>
<dbReference type="SMART" id="SM00977">
    <property type="entry name" value="TilS_C"/>
    <property type="match status" value="1"/>
</dbReference>
<dbReference type="SUPFAM" id="SSF52402">
    <property type="entry name" value="Adenine nucleotide alpha hydrolases-like"/>
    <property type="match status" value="1"/>
</dbReference>
<dbReference type="SUPFAM" id="SSF82829">
    <property type="entry name" value="MesJ substrate recognition domain-like"/>
    <property type="match status" value="1"/>
</dbReference>
<dbReference type="SUPFAM" id="SSF56037">
    <property type="entry name" value="PheT/TilS domain"/>
    <property type="match status" value="1"/>
</dbReference>